<gene>
    <name type="primary">chlI</name>
</gene>
<reference key="1">
    <citation type="journal article" date="2000" name="Nature">
        <title>Ancestral chloroplast genome in Mesostigma viride reveals an early branch of green plant evolution.</title>
        <authorList>
            <person name="Lemieux C."/>
            <person name="Otis C."/>
            <person name="Turmel M."/>
        </authorList>
    </citation>
    <scope>NUCLEOTIDE SEQUENCE [LARGE SCALE GENOMIC DNA]</scope>
    <source>
        <strain>NIES-296 / KY-14 / CCMP 2046</strain>
    </source>
</reference>
<keyword id="KW-0067">ATP-binding</keyword>
<keyword id="KW-0149">Chlorophyll biosynthesis</keyword>
<keyword id="KW-0150">Chloroplast</keyword>
<keyword id="KW-1015">Disulfide bond</keyword>
<keyword id="KW-0436">Ligase</keyword>
<keyword id="KW-0547">Nucleotide-binding</keyword>
<keyword id="KW-0602">Photosynthesis</keyword>
<keyword id="KW-0934">Plastid</keyword>
<protein>
    <recommendedName>
        <fullName>Magnesium-chelatase subunit ChlI</fullName>
        <shortName>Mg-chelatase subunit I-1</shortName>
        <ecNumber>6.6.1.1</ecNumber>
    </recommendedName>
    <alternativeName>
        <fullName>Mg-protoporphyrin IX chelatase subunit ChlI</fullName>
    </alternativeName>
</protein>
<accession>Q9MUT3</accession>
<dbReference type="EC" id="6.6.1.1"/>
<dbReference type="EMBL" id="AF166114">
    <property type="protein sequence ID" value="AAF43818.1"/>
    <property type="molecule type" value="Genomic_DNA"/>
</dbReference>
<dbReference type="RefSeq" id="NP_038377.1">
    <property type="nucleotide sequence ID" value="NC_002186.1"/>
</dbReference>
<dbReference type="SMR" id="Q9MUT3"/>
<dbReference type="GeneID" id="800981"/>
<dbReference type="UniPathway" id="UPA00668"/>
<dbReference type="GO" id="GO:0009507">
    <property type="term" value="C:chloroplast"/>
    <property type="evidence" value="ECO:0007669"/>
    <property type="project" value="UniProtKB-SubCell"/>
</dbReference>
<dbReference type="GO" id="GO:0005524">
    <property type="term" value="F:ATP binding"/>
    <property type="evidence" value="ECO:0007669"/>
    <property type="project" value="UniProtKB-KW"/>
</dbReference>
<dbReference type="GO" id="GO:0016887">
    <property type="term" value="F:ATP hydrolysis activity"/>
    <property type="evidence" value="ECO:0007669"/>
    <property type="project" value="InterPro"/>
</dbReference>
<dbReference type="GO" id="GO:0016851">
    <property type="term" value="F:magnesium chelatase activity"/>
    <property type="evidence" value="ECO:0007669"/>
    <property type="project" value="UniProtKB-EC"/>
</dbReference>
<dbReference type="GO" id="GO:0015995">
    <property type="term" value="P:chlorophyll biosynthetic process"/>
    <property type="evidence" value="ECO:0007669"/>
    <property type="project" value="UniProtKB-UniPathway"/>
</dbReference>
<dbReference type="GO" id="GO:0015979">
    <property type="term" value="P:photosynthesis"/>
    <property type="evidence" value="ECO:0007669"/>
    <property type="project" value="UniProtKB-KW"/>
</dbReference>
<dbReference type="CDD" id="cd00009">
    <property type="entry name" value="AAA"/>
    <property type="match status" value="1"/>
</dbReference>
<dbReference type="FunFam" id="1.10.8.80:FF:000001">
    <property type="entry name" value="Mg-protoporphyrin IX chelatase"/>
    <property type="match status" value="1"/>
</dbReference>
<dbReference type="FunFam" id="3.40.50.300:FF:000601">
    <property type="entry name" value="Mg-protoporphyrin IX chelatase"/>
    <property type="match status" value="1"/>
</dbReference>
<dbReference type="Gene3D" id="1.10.8.80">
    <property type="entry name" value="Magnesium chelatase subunit I, C-Terminal domain"/>
    <property type="match status" value="1"/>
</dbReference>
<dbReference type="Gene3D" id="3.40.50.300">
    <property type="entry name" value="P-loop containing nucleotide triphosphate hydrolases"/>
    <property type="match status" value="1"/>
</dbReference>
<dbReference type="InterPro" id="IPR003593">
    <property type="entry name" value="AAA+_ATPase"/>
</dbReference>
<dbReference type="InterPro" id="IPR045006">
    <property type="entry name" value="CHLI-like"/>
</dbReference>
<dbReference type="InterPro" id="IPR041628">
    <property type="entry name" value="ChlI/MoxR_AAA_lid"/>
</dbReference>
<dbReference type="InterPro" id="IPR011775">
    <property type="entry name" value="Mg_chelatase_ATPase-isu"/>
</dbReference>
<dbReference type="InterPro" id="IPR000523">
    <property type="entry name" value="Mg_chelatse_chII-like_cat_dom"/>
</dbReference>
<dbReference type="InterPro" id="IPR027417">
    <property type="entry name" value="P-loop_NTPase"/>
</dbReference>
<dbReference type="NCBIfam" id="TIGR02030">
    <property type="entry name" value="BchI-ChlI"/>
    <property type="match status" value="1"/>
</dbReference>
<dbReference type="PANTHER" id="PTHR32039">
    <property type="entry name" value="MAGNESIUM-CHELATASE SUBUNIT CHLI"/>
    <property type="match status" value="1"/>
</dbReference>
<dbReference type="PANTHER" id="PTHR32039:SF9">
    <property type="entry name" value="MAGNESIUM-CHELATASE SUBUNIT CHLI-2, CHLOROPLASTIC"/>
    <property type="match status" value="1"/>
</dbReference>
<dbReference type="Pfam" id="PF17863">
    <property type="entry name" value="AAA_lid_2"/>
    <property type="match status" value="1"/>
</dbReference>
<dbReference type="Pfam" id="PF01078">
    <property type="entry name" value="Mg_chelatase"/>
    <property type="match status" value="1"/>
</dbReference>
<dbReference type="SMART" id="SM00382">
    <property type="entry name" value="AAA"/>
    <property type="match status" value="1"/>
</dbReference>
<dbReference type="SUPFAM" id="SSF52540">
    <property type="entry name" value="P-loop containing nucleoside triphosphate hydrolases"/>
    <property type="match status" value="1"/>
</dbReference>
<proteinExistence type="inferred from homology"/>
<comment type="function">
    <text evidence="1">Involved in chlorophyll biosynthesis. Catalyzes the insertion of magnesium ion into protoporphyrin IX to yield Mg-protoporphyrin IX. The magnesium-chelatase is a complex of three subunits, CHLI, CHLD and CHLH. The reaction takes place in two steps, with an ATP-dependent activation followed by an ATP-dependent chelation step (By similarity).</text>
</comment>
<comment type="catalytic activity">
    <reaction>
        <text>protoporphyrin IX + Mg(2+) + ATP + H2O = Mg-protoporphyrin IX + ADP + phosphate + 3 H(+)</text>
        <dbReference type="Rhea" id="RHEA:13961"/>
        <dbReference type="ChEBI" id="CHEBI:15377"/>
        <dbReference type="ChEBI" id="CHEBI:15378"/>
        <dbReference type="ChEBI" id="CHEBI:18420"/>
        <dbReference type="ChEBI" id="CHEBI:30616"/>
        <dbReference type="ChEBI" id="CHEBI:43474"/>
        <dbReference type="ChEBI" id="CHEBI:57306"/>
        <dbReference type="ChEBI" id="CHEBI:60492"/>
        <dbReference type="ChEBI" id="CHEBI:456216"/>
        <dbReference type="EC" id="6.6.1.1"/>
    </reaction>
</comment>
<comment type="activity regulation">
    <text evidence="1">Redox regulation; active in reducing conditions, inactive in oxidizing conditions. Thioredoxins f and m mediate the reversible reductive activation of oxidized CHLI (By similarity).</text>
</comment>
<comment type="pathway">
    <text>Porphyrin-containing compound metabolism; chlorophyll biosynthesis.</text>
</comment>
<comment type="subunit">
    <text>The magnesium chelatase complex is a heterotrimer consisting of subunits CHLI, CHLD and CHLH.</text>
</comment>
<comment type="subcellular location">
    <subcellularLocation>
        <location evidence="3">Plastid</location>
        <location evidence="3">Chloroplast</location>
    </subcellularLocation>
</comment>
<comment type="similarity">
    <text evidence="3">Belongs to the Mg-chelatase subunits D/I family.</text>
</comment>
<feature type="chain" id="PRO_0000206869" description="Magnesium-chelatase subunit ChlI">
    <location>
        <begin position="1"/>
        <end position="360"/>
    </location>
</feature>
<feature type="binding site" evidence="2">
    <location>
        <begin position="50"/>
        <end position="57"/>
    </location>
    <ligand>
        <name>ATP</name>
        <dbReference type="ChEBI" id="CHEBI:30616"/>
    </ligand>
</feature>
<feature type="disulfide bond" description="Inhibitory under oxidizing conditions" evidence="1">
    <location>
        <begin position="285"/>
        <end position="327"/>
    </location>
</feature>
<name>CHLI_MESVI</name>
<sequence>MSTIDLIKNVTKREERPVYPFTAIVGQEEMKLALILNVIDPDIGGVMIMGDRGTGKSTTIRALVDLLPEIEVVTNDPFNSDPRDPDLMSDEVREKINNKQEVPTIKTKIKIVDLPLGATEDRVCGTIDIERALNEGVKAFEPGLLAKANRGILYVDEVNLLDDHLVDILLDSAASGWNTVEREGISVRHPAKFILVGSGNPEEGELRPQLLDRFGMHAEIRTVKDPDLRVKIVEERSSFDENPQVFRKAYEQSQEDVKSQIIQARKNLANVQMDRELRIKVSQICSELDVDGLRGDLVINRAAKALAAFEGRDKVLPKDILKIITLCLRHRLRKDPLESIDSGSKVESKFYEVFGLLEEN</sequence>
<organism>
    <name type="scientific">Mesostigma viride</name>
    <name type="common">Green alga</name>
    <dbReference type="NCBI Taxonomy" id="41882"/>
    <lineage>
        <taxon>Eukaryota</taxon>
        <taxon>Viridiplantae</taxon>
        <taxon>Streptophyta</taxon>
        <taxon>Mesostigmatophyceae</taxon>
        <taxon>Mesostigmatales</taxon>
        <taxon>Mesostigmataceae</taxon>
        <taxon>Mesostigma</taxon>
    </lineage>
</organism>
<evidence type="ECO:0000250" key="1"/>
<evidence type="ECO:0000255" key="2"/>
<evidence type="ECO:0000305" key="3"/>
<geneLocation type="chloroplast"/>